<organism>
    <name type="scientific">Escherichia coli (strain K12)</name>
    <dbReference type="NCBI Taxonomy" id="83333"/>
    <lineage>
        <taxon>Bacteria</taxon>
        <taxon>Pseudomonadati</taxon>
        <taxon>Pseudomonadota</taxon>
        <taxon>Gammaproteobacteria</taxon>
        <taxon>Enterobacterales</taxon>
        <taxon>Enterobacteriaceae</taxon>
        <taxon>Escherichia</taxon>
    </lineage>
</organism>
<feature type="chain" id="PRO_0000212252" description="Prophage bactoprenol-linked glucose translocase homolog">
    <location>
        <begin position="1"/>
        <end position="120"/>
    </location>
</feature>
<feature type="topological domain" description="Cytoplasmic" evidence="2">
    <location>
        <begin position="1"/>
        <end position="9"/>
    </location>
</feature>
<feature type="transmembrane region" description="Helical" evidence="2">
    <location>
        <begin position="10"/>
        <end position="30"/>
    </location>
</feature>
<feature type="topological domain" description="Periplasmic" evidence="2">
    <location>
        <begin position="31"/>
        <end position="33"/>
    </location>
</feature>
<feature type="transmembrane region" description="Helical" evidence="2">
    <location>
        <begin position="34"/>
        <end position="54"/>
    </location>
</feature>
<feature type="topological domain" description="Cytoplasmic" evidence="2">
    <location>
        <begin position="55"/>
        <end position="64"/>
    </location>
</feature>
<feature type="transmembrane region" description="Helical" evidence="2">
    <location>
        <begin position="65"/>
        <end position="85"/>
    </location>
</feature>
<feature type="topological domain" description="Periplasmic" evidence="2">
    <location>
        <begin position="86"/>
        <end position="88"/>
    </location>
</feature>
<feature type="transmembrane region" description="Helical" evidence="2">
    <location>
        <begin position="89"/>
        <end position="109"/>
    </location>
</feature>
<feature type="topological domain" description="Cytoplasmic" evidence="2">
    <location>
        <begin position="110"/>
        <end position="120"/>
    </location>
</feature>
<keyword id="KW-0997">Cell inner membrane</keyword>
<keyword id="KW-1003">Cell membrane</keyword>
<keyword id="KW-0472">Membrane</keyword>
<keyword id="KW-1185">Reference proteome</keyword>
<keyword id="KW-0812">Transmembrane</keyword>
<keyword id="KW-1133">Transmembrane helix</keyword>
<keyword id="KW-0813">Transport</keyword>
<accession>P77682</accession>
<name>GTRA_ECOLI</name>
<dbReference type="EMBL" id="U00096">
    <property type="protein sequence ID" value="AAC75409.1"/>
    <property type="molecule type" value="Genomic_DNA"/>
</dbReference>
<dbReference type="EMBL" id="AP009048">
    <property type="protein sequence ID" value="BAA16209.1"/>
    <property type="molecule type" value="Genomic_DNA"/>
</dbReference>
<dbReference type="PIR" id="C65008">
    <property type="entry name" value="C65008"/>
</dbReference>
<dbReference type="RefSeq" id="NP_416851.1">
    <property type="nucleotide sequence ID" value="NC_000913.3"/>
</dbReference>
<dbReference type="RefSeq" id="WP_000915541.1">
    <property type="nucleotide sequence ID" value="NZ_LN832404.1"/>
</dbReference>
<dbReference type="SMR" id="P77682"/>
<dbReference type="BioGRID" id="4260541">
    <property type="interactions" value="149"/>
</dbReference>
<dbReference type="FunCoup" id="P77682">
    <property type="interactions" value="7"/>
</dbReference>
<dbReference type="STRING" id="511145.b2350"/>
<dbReference type="PaxDb" id="511145-b2350"/>
<dbReference type="EnsemblBacteria" id="AAC75409">
    <property type="protein sequence ID" value="AAC75409"/>
    <property type="gene ID" value="b2350"/>
</dbReference>
<dbReference type="GeneID" id="948821"/>
<dbReference type="KEGG" id="ecj:JW2346"/>
<dbReference type="KEGG" id="eco:b2350"/>
<dbReference type="KEGG" id="ecoc:C3026_13075"/>
<dbReference type="PATRIC" id="fig|83333.103.peg.3236"/>
<dbReference type="EchoBASE" id="EB3883"/>
<dbReference type="eggNOG" id="COG2246">
    <property type="taxonomic scope" value="Bacteria"/>
</dbReference>
<dbReference type="HOGENOM" id="CLU_141008_0_0_6"/>
<dbReference type="InParanoid" id="P77682"/>
<dbReference type="OMA" id="QATTGRY"/>
<dbReference type="OrthoDB" id="5616234at2"/>
<dbReference type="PhylomeDB" id="P77682"/>
<dbReference type="BioCyc" id="EcoCyc:G7219-MONOMER"/>
<dbReference type="PRO" id="PR:P77682"/>
<dbReference type="Proteomes" id="UP000000625">
    <property type="component" value="Chromosome"/>
</dbReference>
<dbReference type="GO" id="GO:0005886">
    <property type="term" value="C:plasma membrane"/>
    <property type="evidence" value="ECO:0000314"/>
    <property type="project" value="EcoCyc"/>
</dbReference>
<dbReference type="GO" id="GO:0008883">
    <property type="term" value="F:glutamyl-tRNA reductase activity"/>
    <property type="evidence" value="ECO:0000314"/>
    <property type="project" value="EcoliWiki"/>
</dbReference>
<dbReference type="GO" id="GO:0050661">
    <property type="term" value="F:NADP binding"/>
    <property type="evidence" value="ECO:0000314"/>
    <property type="project" value="EcoliWiki"/>
</dbReference>
<dbReference type="GO" id="GO:0006783">
    <property type="term" value="P:heme biosynthetic process"/>
    <property type="evidence" value="ECO:0000315"/>
    <property type="project" value="EcoliWiki"/>
</dbReference>
<dbReference type="GO" id="GO:0000271">
    <property type="term" value="P:polysaccharide biosynthetic process"/>
    <property type="evidence" value="ECO:0007669"/>
    <property type="project" value="InterPro"/>
</dbReference>
<dbReference type="InterPro" id="IPR016480">
    <property type="entry name" value="Glc_translocase_bactprenl-link"/>
</dbReference>
<dbReference type="InterPro" id="IPR051401">
    <property type="entry name" value="GtrA_CellWall_Glycosyl"/>
</dbReference>
<dbReference type="InterPro" id="IPR007267">
    <property type="entry name" value="GtrA_DPMS_TM"/>
</dbReference>
<dbReference type="PANTHER" id="PTHR38459">
    <property type="entry name" value="PROPHAGE BACTOPRENOL-LINKED GLUCOSE TRANSLOCASE HOMOLOG"/>
    <property type="match status" value="1"/>
</dbReference>
<dbReference type="PANTHER" id="PTHR38459:SF1">
    <property type="entry name" value="PROPHAGE BACTOPRENOL-LINKED GLUCOSE TRANSLOCASE HOMOLOG"/>
    <property type="match status" value="1"/>
</dbReference>
<dbReference type="Pfam" id="PF04138">
    <property type="entry name" value="GtrA_DPMS_TM"/>
    <property type="match status" value="1"/>
</dbReference>
<dbReference type="PIRSF" id="PIRSF006298">
    <property type="entry name" value="GtrA_prd"/>
    <property type="match status" value="1"/>
</dbReference>
<sequence length="120" mass="13226">MLKLFAKYTSIGVLNTLIHWVVFGVCIYVAHTNQALANFAGFVVAVSFSFFANAKFTFKASTTTMRYMLYVGFMGTLSATVGWAADRCALPPMITLVTFSAISLVCGFVYSKFIVFRDAK</sequence>
<protein>
    <recommendedName>
        <fullName evidence="3">Prophage bactoprenol-linked glucose translocase homolog</fullName>
    </recommendedName>
    <alternativeName>
        <fullName>Bactoprenol-linked glucose translocase homolog from prophage CPS-53</fullName>
    </alternativeName>
</protein>
<comment type="function">
    <text evidence="1">Involved in O antigen modification. Involved in the translocation of bactoprenol-linked glucose across the cytoplasmic membrane (By similarity).</text>
</comment>
<comment type="subcellular location">
    <subcellularLocation>
        <location>Cell inner membrane</location>
        <topology>Multi-pass membrane protein</topology>
    </subcellularLocation>
</comment>
<comment type="similarity">
    <text evidence="3">Belongs to the GtrA family.</text>
</comment>
<reference key="1">
    <citation type="journal article" date="1997" name="DNA Res.">
        <title>Construction of a contiguous 874-kb sequence of the Escherichia coli-K12 genome corresponding to 50.0-68.8 min on the linkage map and analysis of its sequence features.</title>
        <authorList>
            <person name="Yamamoto Y."/>
            <person name="Aiba H."/>
            <person name="Baba T."/>
            <person name="Hayashi K."/>
            <person name="Inada T."/>
            <person name="Isono K."/>
            <person name="Itoh T."/>
            <person name="Kimura S."/>
            <person name="Kitagawa M."/>
            <person name="Makino K."/>
            <person name="Miki T."/>
            <person name="Mitsuhashi N."/>
            <person name="Mizobuchi K."/>
            <person name="Mori H."/>
            <person name="Nakade S."/>
            <person name="Nakamura Y."/>
            <person name="Nashimoto H."/>
            <person name="Oshima T."/>
            <person name="Oyama S."/>
            <person name="Saito N."/>
            <person name="Sampei G."/>
            <person name="Satoh Y."/>
            <person name="Sivasundaram S."/>
            <person name="Tagami H."/>
            <person name="Takahashi H."/>
            <person name="Takeda J."/>
            <person name="Takemoto K."/>
            <person name="Uehara K."/>
            <person name="Wada C."/>
            <person name="Yamagata S."/>
            <person name="Horiuchi T."/>
        </authorList>
    </citation>
    <scope>NUCLEOTIDE SEQUENCE [LARGE SCALE GENOMIC DNA]</scope>
    <source>
        <strain>K12 / W3110 / ATCC 27325 / DSM 5911</strain>
    </source>
</reference>
<reference key="2">
    <citation type="journal article" date="1997" name="Science">
        <title>The complete genome sequence of Escherichia coli K-12.</title>
        <authorList>
            <person name="Blattner F.R."/>
            <person name="Plunkett G. III"/>
            <person name="Bloch C.A."/>
            <person name="Perna N.T."/>
            <person name="Burland V."/>
            <person name="Riley M."/>
            <person name="Collado-Vides J."/>
            <person name="Glasner J.D."/>
            <person name="Rode C.K."/>
            <person name="Mayhew G.F."/>
            <person name="Gregor J."/>
            <person name="Davis N.W."/>
            <person name="Kirkpatrick H.A."/>
            <person name="Goeden M.A."/>
            <person name="Rose D.J."/>
            <person name="Mau B."/>
            <person name="Shao Y."/>
        </authorList>
    </citation>
    <scope>NUCLEOTIDE SEQUENCE [LARGE SCALE GENOMIC DNA]</scope>
    <source>
        <strain>K12 / MG1655 / ATCC 47076</strain>
    </source>
</reference>
<reference key="3">
    <citation type="journal article" date="2006" name="Mol. Syst. Biol.">
        <title>Highly accurate genome sequences of Escherichia coli K-12 strains MG1655 and W3110.</title>
        <authorList>
            <person name="Hayashi K."/>
            <person name="Morooka N."/>
            <person name="Yamamoto Y."/>
            <person name="Fujita K."/>
            <person name="Isono K."/>
            <person name="Choi S."/>
            <person name="Ohtsubo E."/>
            <person name="Baba T."/>
            <person name="Wanner B.L."/>
            <person name="Mori H."/>
            <person name="Horiuchi T."/>
        </authorList>
    </citation>
    <scope>NUCLEOTIDE SEQUENCE [LARGE SCALE GENOMIC DNA]</scope>
    <source>
        <strain>K12 / W3110 / ATCC 27325 / DSM 5911</strain>
    </source>
</reference>
<reference key="4">
    <citation type="journal article" date="2005" name="Science">
        <title>Global topology analysis of the Escherichia coli inner membrane proteome.</title>
        <authorList>
            <person name="Daley D.O."/>
            <person name="Rapp M."/>
            <person name="Granseth E."/>
            <person name="Melen K."/>
            <person name="Drew D."/>
            <person name="von Heijne G."/>
        </authorList>
    </citation>
    <scope>TOPOLOGY [LARGE SCALE ANALYSIS]</scope>
    <source>
        <strain>K12 / MG1655 / ATCC 47076</strain>
    </source>
</reference>
<proteinExistence type="evidence at protein level"/>
<evidence type="ECO:0000250" key="1"/>
<evidence type="ECO:0000255" key="2"/>
<evidence type="ECO:0000305" key="3"/>
<gene>
    <name type="primary">yfdG</name>
    <name type="ordered locus">b2350</name>
    <name type="ordered locus">JW2346</name>
</gene>